<evidence type="ECO:0000255" key="1">
    <source>
        <dbReference type="HAMAP-Rule" id="MF_01368"/>
    </source>
</evidence>
<evidence type="ECO:0000305" key="2"/>
<organism>
    <name type="scientific">Burkholderia pseudomallei (strain 668)</name>
    <dbReference type="NCBI Taxonomy" id="320373"/>
    <lineage>
        <taxon>Bacteria</taxon>
        <taxon>Pseudomonadati</taxon>
        <taxon>Pseudomonadota</taxon>
        <taxon>Betaproteobacteria</taxon>
        <taxon>Burkholderiales</taxon>
        <taxon>Burkholderiaceae</taxon>
        <taxon>Burkholderia</taxon>
        <taxon>pseudomallei group</taxon>
    </lineage>
</organism>
<keyword id="KW-0687">Ribonucleoprotein</keyword>
<keyword id="KW-0689">Ribosomal protein</keyword>
<dbReference type="EMBL" id="CP000570">
    <property type="protein sequence ID" value="ABN85192.1"/>
    <property type="molecule type" value="Genomic_DNA"/>
</dbReference>
<dbReference type="RefSeq" id="WP_004197924.1">
    <property type="nucleotide sequence ID" value="NC_009074.1"/>
</dbReference>
<dbReference type="SMR" id="A3NEF2"/>
<dbReference type="GeneID" id="93061805"/>
<dbReference type="KEGG" id="bpd:BURPS668_3719"/>
<dbReference type="HOGENOM" id="CLU_074407_2_0_4"/>
<dbReference type="GO" id="GO:0022625">
    <property type="term" value="C:cytosolic large ribosomal subunit"/>
    <property type="evidence" value="ECO:0007669"/>
    <property type="project" value="TreeGrafter"/>
</dbReference>
<dbReference type="GO" id="GO:0003735">
    <property type="term" value="F:structural constituent of ribosome"/>
    <property type="evidence" value="ECO:0007669"/>
    <property type="project" value="InterPro"/>
</dbReference>
<dbReference type="GO" id="GO:0006412">
    <property type="term" value="P:translation"/>
    <property type="evidence" value="ECO:0007669"/>
    <property type="project" value="UniProtKB-UniRule"/>
</dbReference>
<dbReference type="FunFam" id="3.90.1030.10:FF:000001">
    <property type="entry name" value="50S ribosomal protein L17"/>
    <property type="match status" value="1"/>
</dbReference>
<dbReference type="Gene3D" id="3.90.1030.10">
    <property type="entry name" value="Ribosomal protein L17"/>
    <property type="match status" value="1"/>
</dbReference>
<dbReference type="HAMAP" id="MF_01368">
    <property type="entry name" value="Ribosomal_bL17"/>
    <property type="match status" value="1"/>
</dbReference>
<dbReference type="InterPro" id="IPR000456">
    <property type="entry name" value="Ribosomal_bL17"/>
</dbReference>
<dbReference type="InterPro" id="IPR047859">
    <property type="entry name" value="Ribosomal_bL17_CS"/>
</dbReference>
<dbReference type="InterPro" id="IPR036373">
    <property type="entry name" value="Ribosomal_bL17_sf"/>
</dbReference>
<dbReference type="NCBIfam" id="TIGR00059">
    <property type="entry name" value="L17"/>
    <property type="match status" value="1"/>
</dbReference>
<dbReference type="PANTHER" id="PTHR14413:SF16">
    <property type="entry name" value="LARGE RIBOSOMAL SUBUNIT PROTEIN BL17M"/>
    <property type="match status" value="1"/>
</dbReference>
<dbReference type="PANTHER" id="PTHR14413">
    <property type="entry name" value="RIBOSOMAL PROTEIN L17"/>
    <property type="match status" value="1"/>
</dbReference>
<dbReference type="Pfam" id="PF01196">
    <property type="entry name" value="Ribosomal_L17"/>
    <property type="match status" value="1"/>
</dbReference>
<dbReference type="SUPFAM" id="SSF64263">
    <property type="entry name" value="Prokaryotic ribosomal protein L17"/>
    <property type="match status" value="1"/>
</dbReference>
<dbReference type="PROSITE" id="PS01167">
    <property type="entry name" value="RIBOSOMAL_L17"/>
    <property type="match status" value="1"/>
</dbReference>
<sequence length="131" mass="15078">MRHRHGLRKLNRTSSHRLAMLRNMSNSLIEHEVIKTTLPKAKELRKVVEPLITLGKKPSLANRRLAFNRLRDRDSVAKLFDVLGPRFANRPGGYLRILKFGFRVGDNAPMALVELLDRPEVEETENVQEAE</sequence>
<gene>
    <name evidence="1" type="primary">rplQ</name>
    <name type="ordered locus">BURPS668_3719</name>
</gene>
<name>RL17_BURP6</name>
<comment type="subunit">
    <text evidence="1">Part of the 50S ribosomal subunit. Contacts protein L32.</text>
</comment>
<comment type="similarity">
    <text evidence="1">Belongs to the bacterial ribosomal protein bL17 family.</text>
</comment>
<proteinExistence type="inferred from homology"/>
<reference key="1">
    <citation type="journal article" date="2010" name="Genome Biol. Evol.">
        <title>Continuing evolution of Burkholderia mallei through genome reduction and large-scale rearrangements.</title>
        <authorList>
            <person name="Losada L."/>
            <person name="Ronning C.M."/>
            <person name="DeShazer D."/>
            <person name="Woods D."/>
            <person name="Fedorova N."/>
            <person name="Kim H.S."/>
            <person name="Shabalina S.A."/>
            <person name="Pearson T.R."/>
            <person name="Brinkac L."/>
            <person name="Tan P."/>
            <person name="Nandi T."/>
            <person name="Crabtree J."/>
            <person name="Badger J."/>
            <person name="Beckstrom-Sternberg S."/>
            <person name="Saqib M."/>
            <person name="Schutzer S.E."/>
            <person name="Keim P."/>
            <person name="Nierman W.C."/>
        </authorList>
    </citation>
    <scope>NUCLEOTIDE SEQUENCE [LARGE SCALE GENOMIC DNA]</scope>
    <source>
        <strain>668</strain>
    </source>
</reference>
<accession>A3NEF2</accession>
<protein>
    <recommendedName>
        <fullName evidence="1">Large ribosomal subunit protein bL17</fullName>
    </recommendedName>
    <alternativeName>
        <fullName evidence="2">50S ribosomal protein L17</fullName>
    </alternativeName>
</protein>
<feature type="chain" id="PRO_1000055787" description="Large ribosomal subunit protein bL17">
    <location>
        <begin position="1"/>
        <end position="131"/>
    </location>
</feature>